<accession>A5DXQ6</accession>
<gene>
    <name type="primary">AIM24</name>
    <name type="ORF">LELG_02143</name>
</gene>
<name>AIM24_LODEL</name>
<comment type="subcellular location">
    <subcellularLocation>
        <location evidence="1">Mitochondrion</location>
    </subcellularLocation>
</comment>
<comment type="similarity">
    <text evidence="4">Belongs to the AIM24 family.</text>
</comment>
<keyword id="KW-0496">Mitochondrion</keyword>
<keyword id="KW-1185">Reference proteome</keyword>
<keyword id="KW-0809">Transit peptide</keyword>
<proteinExistence type="inferred from homology"/>
<sequence>MIRSRQKVLSLVTWTLKRSIVVNAVSASSVDPSFSTMANTTNVAANTNLNKTTTEPGNIRNAPQLSILQTLENAEFIALGTPPTLLTVHSPPSVPLFVRRGALTSIYGLKSTSNTTPTYGSSSSSSSSSSSSSSTATSFTSSLTSSTQPLIRNTLEFPLWWDRFRFNGGHILSYQKLISTVPFSTLISSSSSSLSSSSKYGDVKSFANLILDGSSDWAILNKTAIQAYTGNSLSISMHKLPKYISKSLAKFLNISRIETGLWSFWNSGYTLLSGRGHVGVVGSGGVYQLQLAEDEEILIRKSAILGVTVNGPFDLENCIIKNDVTTTLYLPQEGEQNHKVKVKLNVEERPQGKQVLVQPSAWDQIVLGSKLALNWTRLVWHYQKVFFNRISIILSRFLLGNAEFVKVVGPRNILIQASPHLKQTQKDTRRSFGGSNSEEITQLNEKLVFIEPQINPESGSKSKSNDYLSYVEIDPKKGAVFQNTPNFRDSI</sequence>
<reference key="1">
    <citation type="journal article" date="2009" name="Nature">
        <title>Evolution of pathogenicity and sexual reproduction in eight Candida genomes.</title>
        <authorList>
            <person name="Butler G."/>
            <person name="Rasmussen M.D."/>
            <person name="Lin M.F."/>
            <person name="Santos M.A.S."/>
            <person name="Sakthikumar S."/>
            <person name="Munro C.A."/>
            <person name="Rheinbay E."/>
            <person name="Grabherr M."/>
            <person name="Forche A."/>
            <person name="Reedy J.L."/>
            <person name="Agrafioti I."/>
            <person name="Arnaud M.B."/>
            <person name="Bates S."/>
            <person name="Brown A.J.P."/>
            <person name="Brunke S."/>
            <person name="Costanzo M.C."/>
            <person name="Fitzpatrick D.A."/>
            <person name="de Groot P.W.J."/>
            <person name="Harris D."/>
            <person name="Hoyer L.L."/>
            <person name="Hube B."/>
            <person name="Klis F.M."/>
            <person name="Kodira C."/>
            <person name="Lennard N."/>
            <person name="Logue M.E."/>
            <person name="Martin R."/>
            <person name="Neiman A.M."/>
            <person name="Nikolaou E."/>
            <person name="Quail M.A."/>
            <person name="Quinn J."/>
            <person name="Santos M.C."/>
            <person name="Schmitzberger F.F."/>
            <person name="Sherlock G."/>
            <person name="Shah P."/>
            <person name="Silverstein K.A.T."/>
            <person name="Skrzypek M.S."/>
            <person name="Soll D."/>
            <person name="Staggs R."/>
            <person name="Stansfield I."/>
            <person name="Stumpf M.P.H."/>
            <person name="Sudbery P.E."/>
            <person name="Srikantha T."/>
            <person name="Zeng Q."/>
            <person name="Berman J."/>
            <person name="Berriman M."/>
            <person name="Heitman J."/>
            <person name="Gow N.A.R."/>
            <person name="Lorenz M.C."/>
            <person name="Birren B.W."/>
            <person name="Kellis M."/>
            <person name="Cuomo C.A."/>
        </authorList>
    </citation>
    <scope>NUCLEOTIDE SEQUENCE [LARGE SCALE GENOMIC DNA]</scope>
    <source>
        <strain>ATCC 11503 / BCRC 21390 / CBS 2605 / JCM 1781 / NBRC 1676 / NRRL YB-4239</strain>
    </source>
</reference>
<feature type="transit peptide" description="Mitochondrion" evidence="2">
    <location>
        <begin position="1"/>
        <end position="61"/>
    </location>
</feature>
<feature type="chain" id="PRO_0000399582" description="Altered inheritance of mitochondria protein 24, mitochondrial">
    <location>
        <begin position="62"/>
        <end position="491"/>
    </location>
</feature>
<feature type="region of interest" description="Disordered" evidence="3">
    <location>
        <begin position="114"/>
        <end position="133"/>
    </location>
</feature>
<protein>
    <recommendedName>
        <fullName>Altered inheritance of mitochondria protein 24, mitochondrial</fullName>
    </recommendedName>
</protein>
<evidence type="ECO:0000250" key="1"/>
<evidence type="ECO:0000255" key="2"/>
<evidence type="ECO:0000256" key="3">
    <source>
        <dbReference type="SAM" id="MobiDB-lite"/>
    </source>
</evidence>
<evidence type="ECO:0000305" key="4"/>
<dbReference type="EMBL" id="CH981525">
    <property type="protein sequence ID" value="EDK43964.1"/>
    <property type="molecule type" value="Genomic_DNA"/>
</dbReference>
<dbReference type="RefSeq" id="XP_001527314.1">
    <property type="nucleotide sequence ID" value="XM_001527264.1"/>
</dbReference>
<dbReference type="FunCoup" id="A5DXQ6">
    <property type="interactions" value="10"/>
</dbReference>
<dbReference type="GeneID" id="5233883"/>
<dbReference type="KEGG" id="lel:PVL30_002118"/>
<dbReference type="VEuPathDB" id="FungiDB:LELG_02143"/>
<dbReference type="eggNOG" id="ENOG502RXC5">
    <property type="taxonomic scope" value="Eukaryota"/>
</dbReference>
<dbReference type="HOGENOM" id="CLU_040665_0_0_1"/>
<dbReference type="InParanoid" id="A5DXQ6"/>
<dbReference type="OMA" id="FNGGHIL"/>
<dbReference type="OrthoDB" id="5295771at2759"/>
<dbReference type="Proteomes" id="UP000001996">
    <property type="component" value="Unassembled WGS sequence"/>
</dbReference>
<dbReference type="GO" id="GO:0005743">
    <property type="term" value="C:mitochondrial inner membrane"/>
    <property type="evidence" value="ECO:0007669"/>
    <property type="project" value="TreeGrafter"/>
</dbReference>
<dbReference type="GO" id="GO:0007007">
    <property type="term" value="P:inner mitochondrial membrane organization"/>
    <property type="evidence" value="ECO:0007669"/>
    <property type="project" value="TreeGrafter"/>
</dbReference>
<dbReference type="InterPro" id="IPR002838">
    <property type="entry name" value="AIM24"/>
</dbReference>
<dbReference type="PANTHER" id="PTHR36959">
    <property type="entry name" value="ALTERED INHERITANCE OF MITOCHONDRIA PROTEIN 24, MITOCHONDRIAL"/>
    <property type="match status" value="1"/>
</dbReference>
<dbReference type="PANTHER" id="PTHR36959:SF2">
    <property type="entry name" value="ALTERED INHERITANCE OF MITOCHONDRIA PROTEIN 24, MITOCHONDRIAL"/>
    <property type="match status" value="1"/>
</dbReference>
<dbReference type="Pfam" id="PF01987">
    <property type="entry name" value="AIM24"/>
    <property type="match status" value="1"/>
</dbReference>
<organism>
    <name type="scientific">Lodderomyces elongisporus (strain ATCC 11503 / CBS 2605 / JCM 1781 / NBRC 1676 / NRRL YB-4239)</name>
    <name type="common">Yeast</name>
    <name type="synonym">Saccharomyces elongisporus</name>
    <dbReference type="NCBI Taxonomy" id="379508"/>
    <lineage>
        <taxon>Eukaryota</taxon>
        <taxon>Fungi</taxon>
        <taxon>Dikarya</taxon>
        <taxon>Ascomycota</taxon>
        <taxon>Saccharomycotina</taxon>
        <taxon>Pichiomycetes</taxon>
        <taxon>Debaryomycetaceae</taxon>
        <taxon>Candida/Lodderomyces clade</taxon>
        <taxon>Lodderomyces</taxon>
    </lineage>
</organism>